<accession>Q8IX07</accession>
<sequence>MSRRKQSNPRQIKRSLGDMEAREEVQLVGASHMEQKATAPEAPSPPSADVNSPPPLPPPTSPGGPKELEGQEPEPRPTEEEPGSPWSGPDELEPVVQDGQRRIRARLSLATGLSWGPFHGSVQTRASSPRQAEPSPALTLLLVDEACWLRTLPQALTEAEANTEIHRKDDALWCRVTKPVPAGGLLSVLLTAEPHSTPGHPVKKEPAEPTCPAPAHDLQLLPQQAGMASILATAVINKDVFPCKDCGIWYRSERNLQAHLLYYCASRQGTGSPAAAATDEKPKETYPNERVCPFPQCRKSCPSASSLEIHMRSHSGERPFVCLICLSAFTTKANCERHLKVHTDTLSGVCHSCGFISTTRDILYSHLVTNHMVCQPGSKGEIYSPGAGHPATKLPPDSLGSFQQQHTALQGPLASADLGLAPTPSPGLDRKALAEATNGEARAEPLAQNGGSSEPPAAPRSIKVEAVEEPEAAPILGPGEPGPQAPSRTPSPRSPAPARVKAELSSPTPGSSPVPGELGLAGALFLPQYVFGPDAAPPASEILAKMSELVHSRLQQGAGAGAGGAQTGLFPGAPKGATCFECEITFSNVNNYYVHKRLYCSGRRAPEDAPAARRPKAPPGPARAPPGQPAEPDAPRSSPGPGAREEGAGGAATPEDGAGGRGSEGSQSPGSSVDDAEDDPSRTLCEACNIRFSRHETYTVHKRYYCASRHDPPPRRPAAPPGPPGPAAPPAPSPAAPVRTRRRRKLYELHAAGAPPPPPPGHAPAPESPRPGSGSGSGPGLAPARSPGPAADGPIDLSKKPRRPLPGAPAPALADYHECTACRVSFHSLEAYLAHKKYSCPAAPPPGALGLPAAACPYCPPNGPVRGDLLEHFRLAHGLLLGAPLAGPGVEARTPADRGPSPAPAPAASPQPGSRGPRDGLGPEPQEPPPGPPPSPAAAPEAVPPPPAPPSYSDKGVQTPSKGTPAPLPNGNHRYCRLCNIKFSSLSTFIAHKKYYCSSHAAEHVK</sequence>
<feature type="chain" id="PRO_0000221041" description="Zinc finger protein ZFPM1">
    <location>
        <begin position="1"/>
        <end position="1006"/>
    </location>
</feature>
<feature type="zinc finger region" description="CCHC FOG-type 1" evidence="4">
    <location>
        <begin position="235"/>
        <end position="268"/>
    </location>
</feature>
<feature type="zinc finger region" description="C2H2-type 1" evidence="3">
    <location>
        <begin position="290"/>
        <end position="314"/>
    </location>
</feature>
<feature type="zinc finger region" description="C2H2-type 2" evidence="3">
    <location>
        <begin position="320"/>
        <end position="342"/>
    </location>
</feature>
<feature type="zinc finger region" description="C2H2-type 3" evidence="3">
    <location>
        <begin position="348"/>
        <end position="371"/>
    </location>
</feature>
<feature type="zinc finger region" description="CCHC FOG-type 2" evidence="4">
    <location>
        <begin position="571"/>
        <end position="604"/>
    </location>
</feature>
<feature type="zinc finger region" description="CCHC FOG-type 3" evidence="4">
    <location>
        <begin position="677"/>
        <end position="710"/>
    </location>
</feature>
<feature type="zinc finger region" description="CCHC FOG-type 4" evidence="4">
    <location>
        <begin position="811"/>
        <end position="844"/>
    </location>
</feature>
<feature type="zinc finger region" description="C2H2-type 4" evidence="3">
    <location>
        <begin position="854"/>
        <end position="877"/>
    </location>
</feature>
<feature type="zinc finger region" description="CCHC FOG-type 5" evidence="4">
    <location>
        <begin position="968"/>
        <end position="1001"/>
    </location>
</feature>
<feature type="region of interest" description="Disordered" evidence="5">
    <location>
        <begin position="1"/>
        <end position="93"/>
    </location>
</feature>
<feature type="region of interest" description="Disordered" evidence="5">
    <location>
        <begin position="114"/>
        <end position="133"/>
    </location>
</feature>
<feature type="region of interest" description="Interaction with TACC3" evidence="1">
    <location>
        <begin position="330"/>
        <end position="341"/>
    </location>
</feature>
<feature type="region of interest" description="Disordered" evidence="5">
    <location>
        <begin position="384"/>
        <end position="409"/>
    </location>
</feature>
<feature type="region of interest" description="Disordered" evidence="5">
    <location>
        <begin position="438"/>
        <end position="460"/>
    </location>
</feature>
<feature type="region of interest" description="Disordered" evidence="5">
    <location>
        <begin position="473"/>
        <end position="515"/>
    </location>
</feature>
<feature type="region of interest" description="Disordered" evidence="5">
    <location>
        <begin position="605"/>
        <end position="681"/>
    </location>
</feature>
<feature type="region of interest" description="Disordered" evidence="5">
    <location>
        <begin position="708"/>
        <end position="810"/>
    </location>
</feature>
<feature type="region of interest" description="Interaction with CTBP2" evidence="1">
    <location>
        <begin position="794"/>
        <end position="800"/>
    </location>
</feature>
<feature type="region of interest" description="Disordered" evidence="5">
    <location>
        <begin position="889"/>
        <end position="971"/>
    </location>
</feature>
<feature type="compositionally biased region" description="Basic residues" evidence="5">
    <location>
        <begin position="1"/>
        <end position="13"/>
    </location>
</feature>
<feature type="compositionally biased region" description="Basic and acidic residues" evidence="5">
    <location>
        <begin position="15"/>
        <end position="25"/>
    </location>
</feature>
<feature type="compositionally biased region" description="Pro residues" evidence="5">
    <location>
        <begin position="42"/>
        <end position="62"/>
    </location>
</feature>
<feature type="compositionally biased region" description="Basic and acidic residues" evidence="5">
    <location>
        <begin position="66"/>
        <end position="79"/>
    </location>
</feature>
<feature type="compositionally biased region" description="Polar residues" evidence="5">
    <location>
        <begin position="121"/>
        <end position="130"/>
    </location>
</feature>
<feature type="compositionally biased region" description="Low complexity" evidence="5">
    <location>
        <begin position="485"/>
        <end position="515"/>
    </location>
</feature>
<feature type="compositionally biased region" description="Pro residues" evidence="5">
    <location>
        <begin position="617"/>
        <end position="629"/>
    </location>
</feature>
<feature type="compositionally biased region" description="Pro residues" evidence="5">
    <location>
        <begin position="715"/>
        <end position="735"/>
    </location>
</feature>
<feature type="compositionally biased region" description="Pro residues" evidence="5">
    <location>
        <begin position="754"/>
        <end position="769"/>
    </location>
</feature>
<feature type="compositionally biased region" description="Low complexity" evidence="5">
    <location>
        <begin position="780"/>
        <end position="791"/>
    </location>
</feature>
<feature type="compositionally biased region" description="Pro residues" evidence="5">
    <location>
        <begin position="925"/>
        <end position="950"/>
    </location>
</feature>
<feature type="binding site" evidence="4">
    <location>
        <position position="243"/>
    </location>
    <ligand>
        <name>Zn(2+)</name>
        <dbReference type="ChEBI" id="CHEBI:29105"/>
        <label>1</label>
    </ligand>
</feature>
<feature type="binding site" evidence="4">
    <location>
        <position position="246"/>
    </location>
    <ligand>
        <name>Zn(2+)</name>
        <dbReference type="ChEBI" id="CHEBI:29105"/>
        <label>1</label>
    </ligand>
</feature>
<feature type="binding site" evidence="4">
    <location>
        <position position="259"/>
    </location>
    <ligand>
        <name>Zn(2+)</name>
        <dbReference type="ChEBI" id="CHEBI:29105"/>
        <label>1</label>
    </ligand>
</feature>
<feature type="binding site" evidence="4">
    <location>
        <position position="264"/>
    </location>
    <ligand>
        <name>Zn(2+)</name>
        <dbReference type="ChEBI" id="CHEBI:29105"/>
        <label>1</label>
    </ligand>
</feature>
<feature type="binding site" evidence="4">
    <location>
        <position position="579"/>
    </location>
    <ligand>
        <name>Zn(2+)</name>
        <dbReference type="ChEBI" id="CHEBI:29105"/>
        <label>2</label>
    </ligand>
</feature>
<feature type="binding site" evidence="4">
    <location>
        <position position="582"/>
    </location>
    <ligand>
        <name>Zn(2+)</name>
        <dbReference type="ChEBI" id="CHEBI:29105"/>
        <label>2</label>
    </ligand>
</feature>
<feature type="binding site" evidence="4">
    <location>
        <position position="595"/>
    </location>
    <ligand>
        <name>Zn(2+)</name>
        <dbReference type="ChEBI" id="CHEBI:29105"/>
        <label>2</label>
    </ligand>
</feature>
<feature type="binding site" evidence="4">
    <location>
        <position position="600"/>
    </location>
    <ligand>
        <name>Zn(2+)</name>
        <dbReference type="ChEBI" id="CHEBI:29105"/>
        <label>2</label>
    </ligand>
</feature>
<feature type="binding site" evidence="4">
    <location>
        <position position="685"/>
    </location>
    <ligand>
        <name>Zn(2+)</name>
        <dbReference type="ChEBI" id="CHEBI:29105"/>
        <label>3</label>
    </ligand>
</feature>
<feature type="binding site" evidence="4">
    <location>
        <position position="688"/>
    </location>
    <ligand>
        <name>Zn(2+)</name>
        <dbReference type="ChEBI" id="CHEBI:29105"/>
        <label>3</label>
    </ligand>
</feature>
<feature type="binding site" evidence="4">
    <location>
        <position position="701"/>
    </location>
    <ligand>
        <name>Zn(2+)</name>
        <dbReference type="ChEBI" id="CHEBI:29105"/>
        <label>3</label>
    </ligand>
</feature>
<feature type="binding site" evidence="4">
    <location>
        <position position="706"/>
    </location>
    <ligand>
        <name>Zn(2+)</name>
        <dbReference type="ChEBI" id="CHEBI:29105"/>
        <label>3</label>
    </ligand>
</feature>
<feature type="binding site" evidence="4">
    <location>
        <position position="819"/>
    </location>
    <ligand>
        <name>Zn(2+)</name>
        <dbReference type="ChEBI" id="CHEBI:29105"/>
        <label>4</label>
    </ligand>
</feature>
<feature type="binding site" evidence="4">
    <location>
        <position position="822"/>
    </location>
    <ligand>
        <name>Zn(2+)</name>
        <dbReference type="ChEBI" id="CHEBI:29105"/>
        <label>4</label>
    </ligand>
</feature>
<feature type="binding site" evidence="4">
    <location>
        <position position="835"/>
    </location>
    <ligand>
        <name>Zn(2+)</name>
        <dbReference type="ChEBI" id="CHEBI:29105"/>
        <label>4</label>
    </ligand>
</feature>
<feature type="binding site" evidence="4">
    <location>
        <position position="840"/>
    </location>
    <ligand>
        <name>Zn(2+)</name>
        <dbReference type="ChEBI" id="CHEBI:29105"/>
        <label>4</label>
    </ligand>
</feature>
<feature type="binding site" evidence="4">
    <location>
        <position position="976"/>
    </location>
    <ligand>
        <name>Zn(2+)</name>
        <dbReference type="ChEBI" id="CHEBI:29105"/>
        <label>5</label>
    </ligand>
</feature>
<feature type="binding site" evidence="4">
    <location>
        <position position="979"/>
    </location>
    <ligand>
        <name>Zn(2+)</name>
        <dbReference type="ChEBI" id="CHEBI:29105"/>
        <label>5</label>
    </ligand>
</feature>
<feature type="binding site" evidence="4">
    <location>
        <position position="992"/>
    </location>
    <ligand>
        <name>Zn(2+)</name>
        <dbReference type="ChEBI" id="CHEBI:29105"/>
        <label>5</label>
    </ligand>
</feature>
<feature type="binding site" evidence="4">
    <location>
        <position position="997"/>
    </location>
    <ligand>
        <name>Zn(2+)</name>
        <dbReference type="ChEBI" id="CHEBI:29105"/>
        <label>5</label>
    </ligand>
</feature>
<feature type="modified residue" description="Phosphoserine" evidence="10">
    <location>
        <position position="84"/>
    </location>
</feature>
<feature type="modified residue" description="Phosphoserine" evidence="2">
    <location>
        <position position="128"/>
    </location>
</feature>
<feature type="modified residue" description="Phosphoserine" evidence="10">
    <location>
        <position position="272"/>
    </location>
</feature>
<feature type="modified residue" description="Phosphoserine" evidence="10">
    <location>
        <position position="384"/>
    </location>
</feature>
<feature type="modified residue" description="Phosphoserine" evidence="2">
    <location>
        <position position="491"/>
    </location>
</feature>
<feature type="modified residue" description="Phosphoserine" evidence="10">
    <location>
        <position position="494"/>
    </location>
</feature>
<feature type="modified residue" description="Phosphoserine" evidence="10">
    <location>
        <position position="638"/>
    </location>
</feature>
<feature type="modified residue" description="Phosphoserine" evidence="11">
    <location>
        <position position="671"/>
    </location>
</feature>
<feature type="modified residue" description="Phosphoserine" evidence="8 10 11">
    <location>
        <position position="786"/>
    </location>
</feature>
<feature type="modified residue" description="Phosphoserine" evidence="9 10 11">
    <location>
        <position position="901"/>
    </location>
</feature>
<feature type="modified residue" description="Phosphoserine" evidence="9 10">
    <location>
        <position position="909"/>
    </location>
</feature>
<feature type="modified residue" description="Phosphoserine" evidence="11">
    <location>
        <position position="914"/>
    </location>
</feature>
<feature type="modified residue" description="Phosphoserine" evidence="2">
    <location>
        <position position="935"/>
    </location>
</feature>
<feature type="sequence variant" id="VAR_057491" description="In dbSNP:rs34916016.">
    <original>G</original>
    <variation>A</variation>
    <location>
        <position position="70"/>
    </location>
</feature>
<feature type="sequence conflict" description="In Ref. 1; AAN45858." evidence="7" ref="1">
    <original>R</original>
    <variation>G</variation>
    <location>
        <position position="22"/>
    </location>
</feature>
<feature type="sequence conflict" description="In Ref. 1; AAN45858." evidence="7" ref="1">
    <original>EPLA</original>
    <variation>AP</variation>
    <location>
        <begin position="444"/>
        <end position="447"/>
    </location>
</feature>
<reference key="1">
    <citation type="journal article" date="2003" name="Hum. Genet.">
        <title>Molecular cloning and characterization of the GATA1 cofactor human FOG1 and assessment of its binding to GATA1 proteins carrying D218 substitutions.</title>
        <authorList>
            <person name="Freson K."/>
            <person name="Thys C."/>
            <person name="Wittewrongel C."/>
            <person name="Vermylen J."/>
            <person name="Hoylaerts M.F."/>
            <person name="Van Geet C."/>
        </authorList>
    </citation>
    <scope>NUCLEOTIDE SEQUENCE [MRNA]</scope>
    <scope>TISSUE SPECIFICITY</scope>
    <scope>INTERACTION WITH GATA1 AND GATA2</scope>
    <source>
        <tissue>Megakaryocyte</tissue>
    </source>
</reference>
<reference key="2">
    <citation type="journal article" date="2004" name="Nature">
        <title>The sequence and analysis of duplication-rich human chromosome 16.</title>
        <authorList>
            <person name="Martin J."/>
            <person name="Han C."/>
            <person name="Gordon L.A."/>
            <person name="Terry A."/>
            <person name="Prabhakar S."/>
            <person name="She X."/>
            <person name="Xie G."/>
            <person name="Hellsten U."/>
            <person name="Chan Y.M."/>
            <person name="Altherr M."/>
            <person name="Couronne O."/>
            <person name="Aerts A."/>
            <person name="Bajorek E."/>
            <person name="Black S."/>
            <person name="Blumer H."/>
            <person name="Branscomb E."/>
            <person name="Brown N.C."/>
            <person name="Bruno W.J."/>
            <person name="Buckingham J.M."/>
            <person name="Callen D.F."/>
            <person name="Campbell C.S."/>
            <person name="Campbell M.L."/>
            <person name="Campbell E.W."/>
            <person name="Caoile C."/>
            <person name="Challacombe J.F."/>
            <person name="Chasteen L.A."/>
            <person name="Chertkov O."/>
            <person name="Chi H.C."/>
            <person name="Christensen M."/>
            <person name="Clark L.M."/>
            <person name="Cohn J.D."/>
            <person name="Denys M."/>
            <person name="Detter J.C."/>
            <person name="Dickson M."/>
            <person name="Dimitrijevic-Bussod M."/>
            <person name="Escobar J."/>
            <person name="Fawcett J.J."/>
            <person name="Flowers D."/>
            <person name="Fotopulos D."/>
            <person name="Glavina T."/>
            <person name="Gomez M."/>
            <person name="Gonzales E."/>
            <person name="Goodstein D."/>
            <person name="Goodwin L.A."/>
            <person name="Grady D.L."/>
            <person name="Grigoriev I."/>
            <person name="Groza M."/>
            <person name="Hammon N."/>
            <person name="Hawkins T."/>
            <person name="Haydu L."/>
            <person name="Hildebrand C.E."/>
            <person name="Huang W."/>
            <person name="Israni S."/>
            <person name="Jett J."/>
            <person name="Jewett P.B."/>
            <person name="Kadner K."/>
            <person name="Kimball H."/>
            <person name="Kobayashi A."/>
            <person name="Krawczyk M.-C."/>
            <person name="Leyba T."/>
            <person name="Longmire J.L."/>
            <person name="Lopez F."/>
            <person name="Lou Y."/>
            <person name="Lowry S."/>
            <person name="Ludeman T."/>
            <person name="Manohar C.F."/>
            <person name="Mark G.A."/>
            <person name="McMurray K.L."/>
            <person name="Meincke L.J."/>
            <person name="Morgan J."/>
            <person name="Moyzis R.K."/>
            <person name="Mundt M.O."/>
            <person name="Munk A.C."/>
            <person name="Nandkeshwar R.D."/>
            <person name="Pitluck S."/>
            <person name="Pollard M."/>
            <person name="Predki P."/>
            <person name="Parson-Quintana B."/>
            <person name="Ramirez L."/>
            <person name="Rash S."/>
            <person name="Retterer J."/>
            <person name="Ricke D.O."/>
            <person name="Robinson D.L."/>
            <person name="Rodriguez A."/>
            <person name="Salamov A."/>
            <person name="Saunders E.H."/>
            <person name="Scott D."/>
            <person name="Shough T."/>
            <person name="Stallings R.L."/>
            <person name="Stalvey M."/>
            <person name="Sutherland R.D."/>
            <person name="Tapia R."/>
            <person name="Tesmer J.G."/>
            <person name="Thayer N."/>
            <person name="Thompson L.S."/>
            <person name="Tice H."/>
            <person name="Torney D.C."/>
            <person name="Tran-Gyamfi M."/>
            <person name="Tsai M."/>
            <person name="Ulanovsky L.E."/>
            <person name="Ustaszewska A."/>
            <person name="Vo N."/>
            <person name="White P.S."/>
            <person name="Williams A.L."/>
            <person name="Wills P.L."/>
            <person name="Wu J.-R."/>
            <person name="Wu K."/>
            <person name="Yang J."/>
            <person name="DeJong P."/>
            <person name="Bruce D."/>
            <person name="Doggett N.A."/>
            <person name="Deaven L."/>
            <person name="Schmutz J."/>
            <person name="Grimwood J."/>
            <person name="Richardson P."/>
            <person name="Rokhsar D.S."/>
            <person name="Eichler E.E."/>
            <person name="Gilna P."/>
            <person name="Lucas S.M."/>
            <person name="Myers R.M."/>
            <person name="Rubin E.M."/>
            <person name="Pennacchio L.A."/>
        </authorList>
    </citation>
    <scope>NUCLEOTIDE SEQUENCE [LARGE SCALE GENOMIC DNA]</scope>
</reference>
<reference key="3">
    <citation type="submission" date="2005-09" db="EMBL/GenBank/DDBJ databases">
        <authorList>
            <person name="Mural R.J."/>
            <person name="Istrail S."/>
            <person name="Sutton G.G."/>
            <person name="Florea L."/>
            <person name="Halpern A.L."/>
            <person name="Mobarry C.M."/>
            <person name="Lippert R."/>
            <person name="Walenz B."/>
            <person name="Shatkay H."/>
            <person name="Dew I."/>
            <person name="Miller J.R."/>
            <person name="Flanigan M.J."/>
            <person name="Edwards N.J."/>
            <person name="Bolanos R."/>
            <person name="Fasulo D."/>
            <person name="Halldorsson B.V."/>
            <person name="Hannenhalli S."/>
            <person name="Turner R."/>
            <person name="Yooseph S."/>
            <person name="Lu F."/>
            <person name="Nusskern D.R."/>
            <person name="Shue B.C."/>
            <person name="Zheng X.H."/>
            <person name="Zhong F."/>
            <person name="Delcher A.L."/>
            <person name="Huson D.H."/>
            <person name="Kravitz S.A."/>
            <person name="Mouchard L."/>
            <person name="Reinert K."/>
            <person name="Remington K.A."/>
            <person name="Clark A.G."/>
            <person name="Waterman M.S."/>
            <person name="Eichler E.E."/>
            <person name="Adams M.D."/>
            <person name="Hunkapiller M.W."/>
            <person name="Myers E.W."/>
            <person name="Venter J.C."/>
        </authorList>
    </citation>
    <scope>NUCLEOTIDE SEQUENCE [LARGE SCALE GENOMIC DNA]</scope>
</reference>
<reference key="4">
    <citation type="journal article" date="2007" name="Electrophoresis">
        <title>Toward a global characterization of the phosphoproteome in prostate cancer cells: identification of phosphoproteins in the LNCaP cell line.</title>
        <authorList>
            <person name="Giorgianni F."/>
            <person name="Zhao Y."/>
            <person name="Desiderio D.M."/>
            <person name="Beranova-Giorgianni S."/>
        </authorList>
    </citation>
    <scope>IDENTIFICATION BY MASS SPECTROMETRY [LARGE SCALE ANALYSIS]</scope>
    <source>
        <tissue>Prostate cancer</tissue>
    </source>
</reference>
<reference key="5">
    <citation type="journal article" date="2007" name="Science">
        <title>ATM and ATR substrate analysis reveals extensive protein networks responsive to DNA damage.</title>
        <authorList>
            <person name="Matsuoka S."/>
            <person name="Ballif B.A."/>
            <person name="Smogorzewska A."/>
            <person name="McDonald E.R. III"/>
            <person name="Hurov K.E."/>
            <person name="Luo J."/>
            <person name="Bakalarski C.E."/>
            <person name="Zhao Z."/>
            <person name="Solimini N."/>
            <person name="Lerenthal Y."/>
            <person name="Shiloh Y."/>
            <person name="Gygi S.P."/>
            <person name="Elledge S.J."/>
        </authorList>
    </citation>
    <scope>IDENTIFICATION BY MASS SPECTROMETRY [LARGE SCALE ANALYSIS]</scope>
    <source>
        <tissue>Embryonic kidney</tissue>
    </source>
</reference>
<reference key="6">
    <citation type="journal article" date="2008" name="Proc. Natl. Acad. Sci. U.S.A.">
        <title>A quantitative atlas of mitotic phosphorylation.</title>
        <authorList>
            <person name="Dephoure N."/>
            <person name="Zhou C."/>
            <person name="Villen J."/>
            <person name="Beausoleil S.A."/>
            <person name="Bakalarski C.E."/>
            <person name="Elledge S.J."/>
            <person name="Gygi S.P."/>
        </authorList>
    </citation>
    <scope>PHOSPHORYLATION [LARGE SCALE ANALYSIS] AT SER-786</scope>
    <scope>IDENTIFICATION BY MASS SPECTROMETRY [LARGE SCALE ANALYSIS]</scope>
    <source>
        <tissue>Cervix carcinoma</tissue>
    </source>
</reference>
<reference key="7">
    <citation type="journal article" date="2009" name="Anal. Chem.">
        <title>Lys-N and trypsin cover complementary parts of the phosphoproteome in a refined SCX-based approach.</title>
        <authorList>
            <person name="Gauci S."/>
            <person name="Helbig A.O."/>
            <person name="Slijper M."/>
            <person name="Krijgsveld J."/>
            <person name="Heck A.J."/>
            <person name="Mohammed S."/>
        </authorList>
    </citation>
    <scope>IDENTIFICATION BY MASS SPECTROMETRY [LARGE SCALE ANALYSIS]</scope>
</reference>
<reference key="8">
    <citation type="journal article" date="2009" name="Sci. Signal.">
        <title>Quantitative phosphoproteomic analysis of T cell receptor signaling reveals system-wide modulation of protein-protein interactions.</title>
        <authorList>
            <person name="Mayya V."/>
            <person name="Lundgren D.H."/>
            <person name="Hwang S.-I."/>
            <person name="Rezaul K."/>
            <person name="Wu L."/>
            <person name="Eng J.K."/>
            <person name="Rodionov V."/>
            <person name="Han D.K."/>
        </authorList>
    </citation>
    <scope>PHOSPHORYLATION [LARGE SCALE ANALYSIS] AT SER-901 AND SER-909</scope>
    <scope>IDENTIFICATION BY MASS SPECTROMETRY [LARGE SCALE ANALYSIS]</scope>
    <source>
        <tissue>Leukemic T-cell</tissue>
    </source>
</reference>
<reference key="9">
    <citation type="journal article" date="2013" name="J. Proteome Res.">
        <title>Toward a comprehensive characterization of a human cancer cell phosphoproteome.</title>
        <authorList>
            <person name="Zhou H."/>
            <person name="Di Palma S."/>
            <person name="Preisinger C."/>
            <person name="Peng M."/>
            <person name="Polat A.N."/>
            <person name="Heck A.J."/>
            <person name="Mohammed S."/>
        </authorList>
    </citation>
    <scope>PHOSPHORYLATION [LARGE SCALE ANALYSIS] AT SER-84; SER-272; SER-384; SER-494; SER-638; SER-786; SER-901 AND SER-909</scope>
    <scope>IDENTIFICATION BY MASS SPECTROMETRY [LARGE SCALE ANALYSIS]</scope>
    <source>
        <tissue>Cervix carcinoma</tissue>
        <tissue>Erythroleukemia</tissue>
    </source>
</reference>
<reference key="10">
    <citation type="journal article" date="2014" name="J. Proteomics">
        <title>An enzyme assisted RP-RPLC approach for in-depth analysis of human liver phosphoproteome.</title>
        <authorList>
            <person name="Bian Y."/>
            <person name="Song C."/>
            <person name="Cheng K."/>
            <person name="Dong M."/>
            <person name="Wang F."/>
            <person name="Huang J."/>
            <person name="Sun D."/>
            <person name="Wang L."/>
            <person name="Ye M."/>
            <person name="Zou H."/>
        </authorList>
    </citation>
    <scope>PHOSPHORYLATION [LARGE SCALE ANALYSIS] AT SER-671; SER-786; SER-901 AND SER-914</scope>
    <scope>IDENTIFICATION BY MASS SPECTROMETRY [LARGE SCALE ANALYSIS]</scope>
    <source>
        <tissue>Liver</tissue>
    </source>
</reference>
<dbReference type="EMBL" id="AF488691">
    <property type="protein sequence ID" value="AAN45858.1"/>
    <property type="molecule type" value="mRNA"/>
</dbReference>
<dbReference type="EMBL" id="AC116552">
    <property type="status" value="NOT_ANNOTATED_CDS"/>
    <property type="molecule type" value="Genomic_DNA"/>
</dbReference>
<dbReference type="EMBL" id="AC135049">
    <property type="status" value="NOT_ANNOTATED_CDS"/>
    <property type="molecule type" value="Genomic_DNA"/>
</dbReference>
<dbReference type="EMBL" id="CH471184">
    <property type="protein sequence ID" value="EAW66806.1"/>
    <property type="molecule type" value="Genomic_DNA"/>
</dbReference>
<dbReference type="CCDS" id="CCDS32502.1"/>
<dbReference type="RefSeq" id="NP_722520.2">
    <property type="nucleotide sequence ID" value="NM_153813.3"/>
</dbReference>
<dbReference type="PDB" id="2XU7">
    <property type="method" value="X-ray"/>
    <property type="resolution" value="1.90 A"/>
    <property type="chains" value="C/D=1-15"/>
</dbReference>
<dbReference type="PDBsum" id="2XU7"/>
<dbReference type="SMR" id="Q8IX07"/>
<dbReference type="BioGRID" id="127806">
    <property type="interactions" value="14"/>
</dbReference>
<dbReference type="DIP" id="DIP-48415N"/>
<dbReference type="ELM" id="Q8IX07"/>
<dbReference type="FunCoup" id="Q8IX07">
    <property type="interactions" value="710"/>
</dbReference>
<dbReference type="IntAct" id="Q8IX07">
    <property type="interactions" value="8"/>
</dbReference>
<dbReference type="STRING" id="9606.ENSP00000326630"/>
<dbReference type="GlyGen" id="Q8IX07">
    <property type="glycosylation" value="2 sites"/>
</dbReference>
<dbReference type="iPTMnet" id="Q8IX07"/>
<dbReference type="PhosphoSitePlus" id="Q8IX07"/>
<dbReference type="BioMuta" id="ZFPM1"/>
<dbReference type="DMDM" id="296434508"/>
<dbReference type="jPOST" id="Q8IX07"/>
<dbReference type="MassIVE" id="Q8IX07"/>
<dbReference type="PaxDb" id="9606-ENSP00000326630"/>
<dbReference type="PeptideAtlas" id="Q8IX07"/>
<dbReference type="ProteomicsDB" id="70959"/>
<dbReference type="Pumba" id="Q8IX07"/>
<dbReference type="Antibodypedia" id="30722">
    <property type="antibodies" value="122 antibodies from 24 providers"/>
</dbReference>
<dbReference type="DNASU" id="161882"/>
<dbReference type="Ensembl" id="ENST00000319555.8">
    <property type="protein sequence ID" value="ENSP00000326630.2"/>
    <property type="gene ID" value="ENSG00000179588.9"/>
</dbReference>
<dbReference type="GeneID" id="161882"/>
<dbReference type="KEGG" id="hsa:161882"/>
<dbReference type="MANE-Select" id="ENST00000319555.8">
    <property type="protein sequence ID" value="ENSP00000326630.2"/>
    <property type="RefSeq nucleotide sequence ID" value="NM_153813.3"/>
    <property type="RefSeq protein sequence ID" value="NP_722520.2"/>
</dbReference>
<dbReference type="UCSC" id="uc002fkv.4">
    <property type="organism name" value="human"/>
</dbReference>
<dbReference type="AGR" id="HGNC:19762"/>
<dbReference type="CTD" id="161882"/>
<dbReference type="DisGeNET" id="161882"/>
<dbReference type="GeneCards" id="ZFPM1"/>
<dbReference type="HGNC" id="HGNC:19762">
    <property type="gene designation" value="ZFPM1"/>
</dbReference>
<dbReference type="HPA" id="ENSG00000179588">
    <property type="expression patterns" value="Low tissue specificity"/>
</dbReference>
<dbReference type="MIM" id="601950">
    <property type="type" value="gene"/>
</dbReference>
<dbReference type="neXtProt" id="NX_Q8IX07"/>
<dbReference type="OpenTargets" id="ENSG00000179588"/>
<dbReference type="PharmGKB" id="PA134920282"/>
<dbReference type="VEuPathDB" id="HostDB:ENSG00000179588"/>
<dbReference type="eggNOG" id="KOG1721">
    <property type="taxonomic scope" value="Eukaryota"/>
</dbReference>
<dbReference type="GeneTree" id="ENSGT00530000063823"/>
<dbReference type="HOGENOM" id="CLU_010755_0_0_1"/>
<dbReference type="InParanoid" id="Q8IX07"/>
<dbReference type="OMA" id="DCGIWFR"/>
<dbReference type="OrthoDB" id="8742770at2759"/>
<dbReference type="PAN-GO" id="Q8IX07">
    <property type="GO annotations" value="6 GO annotations based on evolutionary models"/>
</dbReference>
<dbReference type="PhylomeDB" id="Q8IX07"/>
<dbReference type="TreeFam" id="TF331342"/>
<dbReference type="PathwayCommons" id="Q8IX07"/>
<dbReference type="Reactome" id="R-HSA-8936459">
    <property type="pathway name" value="RUNX1 regulates genes involved in megakaryocyte differentiation and platelet function"/>
</dbReference>
<dbReference type="Reactome" id="R-HSA-983231">
    <property type="pathway name" value="Factors involved in megakaryocyte development and platelet production"/>
</dbReference>
<dbReference type="SignaLink" id="Q8IX07"/>
<dbReference type="SIGNOR" id="Q8IX07"/>
<dbReference type="BioGRID-ORCS" id="161882">
    <property type="hits" value="21 hits in 1182 CRISPR screens"/>
</dbReference>
<dbReference type="ChiTaRS" id="ZFPM1">
    <property type="organism name" value="human"/>
</dbReference>
<dbReference type="EvolutionaryTrace" id="Q8IX07"/>
<dbReference type="GeneWiki" id="ZFPM1"/>
<dbReference type="GenomeRNAi" id="161882"/>
<dbReference type="Pharos" id="Q8IX07">
    <property type="development level" value="Tbio"/>
</dbReference>
<dbReference type="PRO" id="PR:Q8IX07"/>
<dbReference type="Proteomes" id="UP000005640">
    <property type="component" value="Chromosome 16"/>
</dbReference>
<dbReference type="RNAct" id="Q8IX07">
    <property type="molecule type" value="protein"/>
</dbReference>
<dbReference type="Bgee" id="ENSG00000179588">
    <property type="expression patterns" value="Expressed in pancreatic ductal cell and 164 other cell types or tissues"/>
</dbReference>
<dbReference type="ExpressionAtlas" id="Q8IX07">
    <property type="expression patterns" value="baseline and differential"/>
</dbReference>
<dbReference type="GO" id="GO:0000785">
    <property type="term" value="C:chromatin"/>
    <property type="evidence" value="ECO:0000247"/>
    <property type="project" value="NTNU_SB"/>
</dbReference>
<dbReference type="GO" id="GO:0005654">
    <property type="term" value="C:nucleoplasm"/>
    <property type="evidence" value="ECO:0000304"/>
    <property type="project" value="Reactome"/>
</dbReference>
<dbReference type="GO" id="GO:0005634">
    <property type="term" value="C:nucleus"/>
    <property type="evidence" value="ECO:0000318"/>
    <property type="project" value="GO_Central"/>
</dbReference>
<dbReference type="GO" id="GO:0005667">
    <property type="term" value="C:transcription regulator complex"/>
    <property type="evidence" value="ECO:0000314"/>
    <property type="project" value="BHF-UCL"/>
</dbReference>
<dbReference type="GO" id="GO:0017053">
    <property type="term" value="C:transcription repressor complex"/>
    <property type="evidence" value="ECO:0000314"/>
    <property type="project" value="BHF-UCL"/>
</dbReference>
<dbReference type="GO" id="GO:0003677">
    <property type="term" value="F:DNA binding"/>
    <property type="evidence" value="ECO:0007669"/>
    <property type="project" value="UniProtKB-KW"/>
</dbReference>
<dbReference type="GO" id="GO:0061629">
    <property type="term" value="F:RNA polymerase II-specific DNA-binding transcription factor binding"/>
    <property type="evidence" value="ECO:0000353"/>
    <property type="project" value="BHF-UCL"/>
</dbReference>
<dbReference type="GO" id="GO:0003714">
    <property type="term" value="F:transcription corepressor activity"/>
    <property type="evidence" value="ECO:0000316"/>
    <property type="project" value="BHF-UCL"/>
</dbReference>
<dbReference type="GO" id="GO:0008270">
    <property type="term" value="F:zinc ion binding"/>
    <property type="evidence" value="ECO:0007669"/>
    <property type="project" value="UniProtKB-KW"/>
</dbReference>
<dbReference type="GO" id="GO:0060413">
    <property type="term" value="P:atrial septum morphogenesis"/>
    <property type="evidence" value="ECO:0000250"/>
    <property type="project" value="BHF-UCL"/>
</dbReference>
<dbReference type="GO" id="GO:0003181">
    <property type="term" value="P:atrioventricular valve morphogenesis"/>
    <property type="evidence" value="ECO:0000250"/>
    <property type="project" value="BHF-UCL"/>
</dbReference>
<dbReference type="GO" id="GO:0055008">
    <property type="term" value="P:cardiac muscle tissue morphogenesis"/>
    <property type="evidence" value="ECO:0000250"/>
    <property type="project" value="BHF-UCL"/>
</dbReference>
<dbReference type="GO" id="GO:0060318">
    <property type="term" value="P:definitive erythrocyte differentiation"/>
    <property type="evidence" value="ECO:0007669"/>
    <property type="project" value="Ensembl"/>
</dbReference>
<dbReference type="GO" id="GO:0035162">
    <property type="term" value="P:embryonic hemopoiesis"/>
    <property type="evidence" value="ECO:0000250"/>
    <property type="project" value="BHF-UCL"/>
</dbReference>
<dbReference type="GO" id="GO:0030218">
    <property type="term" value="P:erythrocyte differentiation"/>
    <property type="evidence" value="ECO:0000250"/>
    <property type="project" value="BHF-UCL"/>
</dbReference>
<dbReference type="GO" id="GO:0030851">
    <property type="term" value="P:granulocyte differentiation"/>
    <property type="evidence" value="ECO:0007669"/>
    <property type="project" value="Ensembl"/>
</dbReference>
<dbReference type="GO" id="GO:0007507">
    <property type="term" value="P:heart development"/>
    <property type="evidence" value="ECO:0000318"/>
    <property type="project" value="GO_Central"/>
</dbReference>
<dbReference type="GO" id="GO:0035855">
    <property type="term" value="P:megakaryocyte development"/>
    <property type="evidence" value="ECO:0007669"/>
    <property type="project" value="Ensembl"/>
</dbReference>
<dbReference type="GO" id="GO:0030219">
    <property type="term" value="P:megakaryocyte differentiation"/>
    <property type="evidence" value="ECO:0000250"/>
    <property type="project" value="BHF-UCL"/>
</dbReference>
<dbReference type="GO" id="GO:0003192">
    <property type="term" value="P:mitral valve formation"/>
    <property type="evidence" value="ECO:0000250"/>
    <property type="project" value="BHF-UCL"/>
</dbReference>
<dbReference type="GO" id="GO:0032713">
    <property type="term" value="P:negative regulation of interleukin-4 production"/>
    <property type="evidence" value="ECO:0000314"/>
    <property type="project" value="BHF-UCL"/>
</dbReference>
<dbReference type="GO" id="GO:0060377">
    <property type="term" value="P:negative regulation of mast cell differentiation"/>
    <property type="evidence" value="ECO:0000250"/>
    <property type="project" value="BHF-UCL"/>
</dbReference>
<dbReference type="GO" id="GO:0000122">
    <property type="term" value="P:negative regulation of transcription by RNA polymerase II"/>
    <property type="evidence" value="ECO:0000316"/>
    <property type="project" value="BHF-UCL"/>
</dbReference>
<dbReference type="GO" id="GO:0003151">
    <property type="term" value="P:outflow tract morphogenesis"/>
    <property type="evidence" value="ECO:0000250"/>
    <property type="project" value="BHF-UCL"/>
</dbReference>
<dbReference type="GO" id="GO:0030220">
    <property type="term" value="P:platelet formation"/>
    <property type="evidence" value="ECO:0000316"/>
    <property type="project" value="BHF-UCL"/>
</dbReference>
<dbReference type="GO" id="GO:0045944">
    <property type="term" value="P:positive regulation of transcription by RNA polymerase II"/>
    <property type="evidence" value="ECO:0000318"/>
    <property type="project" value="GO_Central"/>
</dbReference>
<dbReference type="GO" id="GO:0032729">
    <property type="term" value="P:positive regulation of type II interferon production"/>
    <property type="evidence" value="ECO:0000314"/>
    <property type="project" value="BHF-UCL"/>
</dbReference>
<dbReference type="GO" id="GO:0060319">
    <property type="term" value="P:primitive erythrocyte differentiation"/>
    <property type="evidence" value="ECO:0007669"/>
    <property type="project" value="Ensembl"/>
</dbReference>
<dbReference type="GO" id="GO:0032642">
    <property type="term" value="P:regulation of chemokine production"/>
    <property type="evidence" value="ECO:0007669"/>
    <property type="project" value="Ensembl"/>
</dbReference>
<dbReference type="GO" id="GO:0010724">
    <property type="term" value="P:regulation of definitive erythrocyte differentiation"/>
    <property type="evidence" value="ECO:0000314"/>
    <property type="project" value="BHF-UCL"/>
</dbReference>
<dbReference type="GO" id="GO:0002295">
    <property type="term" value="P:T-helper cell lineage commitment"/>
    <property type="evidence" value="ECO:0000305"/>
    <property type="project" value="BHF-UCL"/>
</dbReference>
<dbReference type="GO" id="GO:0003195">
    <property type="term" value="P:tricuspid valve formation"/>
    <property type="evidence" value="ECO:0000250"/>
    <property type="project" value="BHF-UCL"/>
</dbReference>
<dbReference type="GO" id="GO:0060412">
    <property type="term" value="P:ventricular septum morphogenesis"/>
    <property type="evidence" value="ECO:0000250"/>
    <property type="project" value="BHF-UCL"/>
</dbReference>
<dbReference type="CDD" id="cd19215">
    <property type="entry name" value="PR-SET_ZFPM1"/>
    <property type="match status" value="1"/>
</dbReference>
<dbReference type="FunFam" id="3.30.160.60:FF:001079">
    <property type="entry name" value="zinc finger protein ZFPM1 isoform X2"/>
    <property type="match status" value="1"/>
</dbReference>
<dbReference type="FunFam" id="3.30.160.60:FF:000828">
    <property type="entry name" value="Zinc finger protein, FOG family member 1"/>
    <property type="match status" value="1"/>
</dbReference>
<dbReference type="Gene3D" id="3.30.160.60">
    <property type="entry name" value="Classic Zinc Finger"/>
    <property type="match status" value="2"/>
</dbReference>
<dbReference type="IDEAL" id="IID00324"/>
<dbReference type="InterPro" id="IPR039746">
    <property type="entry name" value="FOG"/>
</dbReference>
<dbReference type="InterPro" id="IPR034731">
    <property type="entry name" value="ZF_CCHC_FOG"/>
</dbReference>
<dbReference type="InterPro" id="IPR049361">
    <property type="entry name" value="ZFPM1/2_PR"/>
</dbReference>
<dbReference type="InterPro" id="IPR036236">
    <property type="entry name" value="Znf_C2H2_sf"/>
</dbReference>
<dbReference type="InterPro" id="IPR013087">
    <property type="entry name" value="Znf_C2H2_type"/>
</dbReference>
<dbReference type="PANTHER" id="PTHR12958">
    <property type="entry name" value="FRIEND OF GATA2-RELATED"/>
    <property type="match status" value="1"/>
</dbReference>
<dbReference type="PANTHER" id="PTHR12958:SF4">
    <property type="entry name" value="ZINC FINGER PROTEIN ZFPM1"/>
    <property type="match status" value="1"/>
</dbReference>
<dbReference type="Pfam" id="PF25445">
    <property type="entry name" value="CCHC_ZFPM2"/>
    <property type="match status" value="1"/>
</dbReference>
<dbReference type="Pfam" id="PF21182">
    <property type="entry name" value="FOG1-like_PR"/>
    <property type="match status" value="1"/>
</dbReference>
<dbReference type="Pfam" id="PF00096">
    <property type="entry name" value="zf-C2H2"/>
    <property type="match status" value="1"/>
</dbReference>
<dbReference type="SMART" id="SM00355">
    <property type="entry name" value="ZnF_C2H2"/>
    <property type="match status" value="9"/>
</dbReference>
<dbReference type="SUPFAM" id="SSF57667">
    <property type="entry name" value="beta-beta-alpha zinc fingers"/>
    <property type="match status" value="6"/>
</dbReference>
<dbReference type="PROSITE" id="PS51810">
    <property type="entry name" value="ZF_CCHC_FOG"/>
    <property type="match status" value="5"/>
</dbReference>
<dbReference type="PROSITE" id="PS00028">
    <property type="entry name" value="ZINC_FINGER_C2H2_1"/>
    <property type="match status" value="2"/>
</dbReference>
<dbReference type="PROSITE" id="PS50157">
    <property type="entry name" value="ZINC_FINGER_C2H2_2"/>
    <property type="match status" value="2"/>
</dbReference>
<organism>
    <name type="scientific">Homo sapiens</name>
    <name type="common">Human</name>
    <dbReference type="NCBI Taxonomy" id="9606"/>
    <lineage>
        <taxon>Eukaryota</taxon>
        <taxon>Metazoa</taxon>
        <taxon>Chordata</taxon>
        <taxon>Craniata</taxon>
        <taxon>Vertebrata</taxon>
        <taxon>Euteleostomi</taxon>
        <taxon>Mammalia</taxon>
        <taxon>Eutheria</taxon>
        <taxon>Euarchontoglires</taxon>
        <taxon>Primates</taxon>
        <taxon>Haplorrhini</taxon>
        <taxon>Catarrhini</taxon>
        <taxon>Hominidae</taxon>
        <taxon>Homo</taxon>
    </lineage>
</organism>
<gene>
    <name type="primary">ZFPM1</name>
    <name type="synonym">FOG1</name>
    <name type="synonym">ZFN89A</name>
</gene>
<protein>
    <recommendedName>
        <fullName>Zinc finger protein ZFPM1</fullName>
    </recommendedName>
    <alternativeName>
        <fullName>Friend of GATA protein 1</fullName>
        <shortName>FOG-1</shortName>
        <shortName>Friend of GATA 1</shortName>
    </alternativeName>
    <alternativeName>
        <fullName>Zinc finger protein 89A</fullName>
    </alternativeName>
    <alternativeName>
        <fullName>Zinc finger protein multitype 1</fullName>
    </alternativeName>
</protein>
<keyword id="KW-0002">3D-structure</keyword>
<keyword id="KW-0010">Activator</keyword>
<keyword id="KW-0238">DNA-binding</keyword>
<keyword id="KW-0479">Metal-binding</keyword>
<keyword id="KW-0539">Nucleus</keyword>
<keyword id="KW-0597">Phosphoprotein</keyword>
<keyword id="KW-1267">Proteomics identification</keyword>
<keyword id="KW-1185">Reference proteome</keyword>
<keyword id="KW-0677">Repeat</keyword>
<keyword id="KW-0678">Repressor</keyword>
<keyword id="KW-0804">Transcription</keyword>
<keyword id="KW-0805">Transcription regulation</keyword>
<keyword id="KW-0862">Zinc</keyword>
<keyword id="KW-0863">Zinc-finger</keyword>
<name>FOG1_HUMAN</name>
<comment type="function">
    <text evidence="1">Transcription regulator that plays an essential role in erythroid and megakaryocytic cell differentiation. Essential cofactor that acts via the formation of a heterodimer with transcription factors of the GATA family GATA1, GATA2 and GATA3. Such heterodimer can both activate or repress transcriptional activity, depending on the cell and promoter context. The heterodimer formed with GATA proteins is essential to activate expression of genes such as NFE2, ITGA2B, alpha- and beta-globin, while it represses expression of KLF1. May be involved in regulation of some genes in gonads. May also be involved in cardiac development, in a non-redundant way with ZFPM2/FOG2 (By similarity).</text>
</comment>
<comment type="subunit">
    <text evidence="1 6">Interacts with corepressor CTBP2; this interaction is however not essential for corepressor activity (By similarity). Interacts with the N-terminal zinc-finger of GATA1, GATA2 and probably GATA3.</text>
</comment>
<comment type="interaction">
    <interactant intactId="EBI-3942619">
        <id>Q8IX07</id>
    </interactant>
    <interactant intactId="EBI-3909284">
        <id>P15976</id>
        <label>GATA1</label>
    </interactant>
    <organismsDiffer>false</organismsDiffer>
    <experiments>2</experiments>
</comment>
<comment type="interaction">
    <interactant intactId="EBI-3942619">
        <id>Q8IX07</id>
    </interactant>
    <interactant intactId="EBI-373586">
        <id>P49841</id>
        <label>GSK3B</label>
    </interactant>
    <organismsDiffer>false</organismsDiffer>
    <experiments>2</experiments>
</comment>
<comment type="interaction">
    <interactant intactId="EBI-3942619">
        <id>Q8IX07</id>
    </interactant>
    <interactant intactId="EBI-620823">
        <id>Q09028</id>
        <label>RBBP4</label>
    </interactant>
    <organismsDiffer>false</organismsDiffer>
    <experiments>5</experiments>
</comment>
<comment type="subcellular location">
    <subcellularLocation>
        <location evidence="1">Nucleus</location>
    </subcellularLocation>
</comment>
<comment type="tissue specificity">
    <text evidence="6">Mainly expressed in hematopoietic tissues. Also expressed in adult cerebellum, stomach, lymph node, liver and pancreas. Expressed in fetal heart, liver and spleen.</text>
</comment>
<comment type="domain">
    <text evidence="1">The CCHC FOG-type zinc fingers 1, 2, 3 and 5 directly bind to GATA-type zinc fingers. The Tyr residue adjacent to the last Cys of the CCHC FOG-type zinc finger is essential for the interaction with GATA-type zinc fingers (By similarity).</text>
</comment>
<comment type="similarity">
    <text evidence="4">Belongs to the FOG (Friend of GATA) family.</text>
</comment>
<proteinExistence type="evidence at protein level"/>
<evidence type="ECO:0000250" key="1"/>
<evidence type="ECO:0000250" key="2">
    <source>
        <dbReference type="UniProtKB" id="O35615"/>
    </source>
</evidence>
<evidence type="ECO:0000255" key="3">
    <source>
        <dbReference type="PROSITE-ProRule" id="PRU00042"/>
    </source>
</evidence>
<evidence type="ECO:0000255" key="4">
    <source>
        <dbReference type="PROSITE-ProRule" id="PRU01153"/>
    </source>
</evidence>
<evidence type="ECO:0000256" key="5">
    <source>
        <dbReference type="SAM" id="MobiDB-lite"/>
    </source>
</evidence>
<evidence type="ECO:0000269" key="6">
    <source>
    </source>
</evidence>
<evidence type="ECO:0000305" key="7"/>
<evidence type="ECO:0007744" key="8">
    <source>
    </source>
</evidence>
<evidence type="ECO:0007744" key="9">
    <source>
    </source>
</evidence>
<evidence type="ECO:0007744" key="10">
    <source>
    </source>
</evidence>
<evidence type="ECO:0007744" key="11">
    <source>
    </source>
</evidence>